<comment type="function">
    <text evidence="2 3">Catalyzes the hydrolysis of diacylglycerol in vitro and may function as a key regulator in lipid metabolism, namely by regulating the intracellular levels of diacylglycerol (By similarity). 1,2-diacyl-sn-glycerols are the preferred substrate over 1,3-diacyl-sn-glycerols. The enzyme hydrolyzes stearate in preference to palmitate from the sn-1 position of 1,2-diacyl-sn-glycerols (By similarity).</text>
</comment>
<comment type="catalytic activity">
    <reaction evidence="3">
        <text>1-octadecanoyl-2-(5Z,8Z,11Z,14Z-eicosatetraenoyl)-sn-glycerol + H2O = 2-(5Z,8Z,11Z,14Z-eicosatetraenoyl)-glycerol + octadecanoate + H(+)</text>
        <dbReference type="Rhea" id="RHEA:38507"/>
        <dbReference type="ChEBI" id="CHEBI:15377"/>
        <dbReference type="ChEBI" id="CHEBI:15378"/>
        <dbReference type="ChEBI" id="CHEBI:25629"/>
        <dbReference type="ChEBI" id="CHEBI:52392"/>
        <dbReference type="ChEBI" id="CHEBI:75728"/>
    </reaction>
</comment>
<comment type="catalytic activity">
    <reaction evidence="3">
        <text>a 1,2-diacyl-sn-glycerol + H2O = a 2-acylglycerol + a fatty acid + H(+)</text>
        <dbReference type="Rhea" id="RHEA:33275"/>
        <dbReference type="ChEBI" id="CHEBI:15377"/>
        <dbReference type="ChEBI" id="CHEBI:15378"/>
        <dbReference type="ChEBI" id="CHEBI:17389"/>
        <dbReference type="ChEBI" id="CHEBI:17815"/>
        <dbReference type="ChEBI" id="CHEBI:28868"/>
        <dbReference type="EC" id="3.1.1.116"/>
    </reaction>
</comment>
<comment type="catalytic activity">
    <reaction evidence="2">
        <text>a 1,3-diacyl-sn-glycerol + H2O = a 1-acyl-sn-glycerol + a fatty acid + H(+)</text>
        <dbReference type="Rhea" id="RHEA:38503"/>
        <dbReference type="ChEBI" id="CHEBI:15377"/>
        <dbReference type="ChEBI" id="CHEBI:15378"/>
        <dbReference type="ChEBI" id="CHEBI:28868"/>
        <dbReference type="ChEBI" id="CHEBI:64683"/>
        <dbReference type="ChEBI" id="CHEBI:77272"/>
    </reaction>
</comment>
<comment type="catalytic activity">
    <reaction evidence="2">
        <text>1-octadecanoyl-2-(9Z-octadecenoyl)-sn-glycerol + H2O = 2-(9Z-octadecenoyl)-glycerol + octadecanoate + H(+)</text>
        <dbReference type="Rhea" id="RHEA:77103"/>
        <dbReference type="ChEBI" id="CHEBI:15377"/>
        <dbReference type="ChEBI" id="CHEBI:15378"/>
        <dbReference type="ChEBI" id="CHEBI:25629"/>
        <dbReference type="ChEBI" id="CHEBI:73990"/>
        <dbReference type="ChEBI" id="CHEBI:75468"/>
    </reaction>
</comment>
<comment type="catalytic activity">
    <reaction evidence="2">
        <text>1-octadecanoyl-2-(4Z,7Z,10Z,13Z,16Z,19Z-docosahexaenoyl)-sn-glycerol + H2O = 2-(4Z,7Z,10Z,13Z,16Z,19Z-docosahexaenoyl)-glycerol + octadecanoate + H(+)</text>
        <dbReference type="Rhea" id="RHEA:77107"/>
        <dbReference type="ChEBI" id="CHEBI:15377"/>
        <dbReference type="ChEBI" id="CHEBI:15378"/>
        <dbReference type="ChEBI" id="CHEBI:25629"/>
        <dbReference type="ChEBI" id="CHEBI:77129"/>
        <dbReference type="ChEBI" id="CHEBI:186738"/>
    </reaction>
</comment>
<comment type="catalytic activity">
    <reaction evidence="2">
        <text>1,2-didecanoylglycerol + H2O = decanoylglycerol + decanoate + H(+)</text>
        <dbReference type="Rhea" id="RHEA:48596"/>
        <dbReference type="ChEBI" id="CHEBI:11152"/>
        <dbReference type="ChEBI" id="CHEBI:15377"/>
        <dbReference type="ChEBI" id="CHEBI:15378"/>
        <dbReference type="ChEBI" id="CHEBI:27689"/>
        <dbReference type="ChEBI" id="CHEBI:90605"/>
    </reaction>
</comment>
<comment type="subcellular location">
    <subcellularLocation>
        <location evidence="3">Mitochondrion</location>
    </subcellularLocation>
    <subcellularLocation>
        <location evidence="3">Mitochondrion matrix</location>
    </subcellularLocation>
</comment>
<comment type="PTM">
    <text evidence="2">Phosphorylated.</text>
</comment>
<comment type="similarity">
    <text evidence="5">Belongs to the AB hydrolase superfamily.</text>
</comment>
<accession>Q2TAP9</accession>
<proteinExistence type="evidence at transcript level"/>
<gene>
    <name evidence="3" type="primary">abhd11</name>
</gene>
<name>ABHDB_XENLA</name>
<keyword id="KW-0378">Hydrolase</keyword>
<keyword id="KW-0496">Mitochondrion</keyword>
<keyword id="KW-1185">Reference proteome</keyword>
<keyword id="KW-0809">Transit peptide</keyword>
<reference key="1">
    <citation type="submission" date="2005-12" db="EMBL/GenBank/DDBJ databases">
        <authorList>
            <consortium name="NIH - Xenopus Gene Collection (XGC) project"/>
        </authorList>
    </citation>
    <scope>NUCLEOTIDE SEQUENCE [LARGE SCALE MRNA]</scope>
    <source>
        <tissue>Testis</tissue>
    </source>
</reference>
<sequence length="312" mass="35217">MITFKSFHCSRGWHLWKHWRAFHSHSNSGTLFCQNRTTDKNTHATRVVDLSYDLYDGSVLGPPLVLLHGLFGSKSNFQTIARALVRKTGRKVLTLDARNHGCSPHDDIMTYPAMSADVCQILHQLQITNCVLIGHSMGGKTAMTVALQEPKLVERLVSVDISPAPTVPQTGFPHYIAAMQKVHFEEKMPRSTARRLADEQLSSTVKEASIRQFLLTNLVQENGTFKWRVNLEVISRHLQDLLDFPEFQEPYPGPVLFLGGANSPYISSENYPEIERLFPFANVEYIFGAGHWVHADKTHDFLNAICNFVESA</sequence>
<organism>
    <name type="scientific">Xenopus laevis</name>
    <name type="common">African clawed frog</name>
    <dbReference type="NCBI Taxonomy" id="8355"/>
    <lineage>
        <taxon>Eukaryota</taxon>
        <taxon>Metazoa</taxon>
        <taxon>Chordata</taxon>
        <taxon>Craniata</taxon>
        <taxon>Vertebrata</taxon>
        <taxon>Euteleostomi</taxon>
        <taxon>Amphibia</taxon>
        <taxon>Batrachia</taxon>
        <taxon>Anura</taxon>
        <taxon>Pipoidea</taxon>
        <taxon>Pipidae</taxon>
        <taxon>Xenopodinae</taxon>
        <taxon>Xenopus</taxon>
        <taxon>Xenopus</taxon>
    </lineage>
</organism>
<dbReference type="EC" id="3.1.1.116" evidence="3"/>
<dbReference type="EMBL" id="BC110780">
    <property type="protein sequence ID" value="AAI10781.1"/>
    <property type="molecule type" value="mRNA"/>
</dbReference>
<dbReference type="RefSeq" id="NP_001089942.1">
    <property type="nucleotide sequence ID" value="NM_001096473.1"/>
</dbReference>
<dbReference type="SMR" id="Q2TAP9"/>
<dbReference type="ESTHER" id="xenla-q2tap9">
    <property type="family name" value="ABHD11-Acetyl_transferase"/>
</dbReference>
<dbReference type="MEROPS" id="S33.976"/>
<dbReference type="DNASU" id="735011"/>
<dbReference type="GeneID" id="735011"/>
<dbReference type="KEGG" id="xla:735011"/>
<dbReference type="AGR" id="Xenbase:XB-GENE-952694"/>
<dbReference type="CTD" id="735011"/>
<dbReference type="Xenbase" id="XB-GENE-952694">
    <property type="gene designation" value="abhd11.L"/>
</dbReference>
<dbReference type="OMA" id="FLGMSDN"/>
<dbReference type="OrthoDB" id="8119704at2759"/>
<dbReference type="Proteomes" id="UP000186698">
    <property type="component" value="Chromosome 2L"/>
</dbReference>
<dbReference type="Bgee" id="735011">
    <property type="expression patterns" value="Expressed in testis and 20 other cell types or tissues"/>
</dbReference>
<dbReference type="GO" id="GO:0005759">
    <property type="term" value="C:mitochondrial matrix"/>
    <property type="evidence" value="ECO:0000250"/>
    <property type="project" value="UniProtKB"/>
</dbReference>
<dbReference type="GO" id="GO:0005739">
    <property type="term" value="C:mitochondrion"/>
    <property type="evidence" value="ECO:0000250"/>
    <property type="project" value="UniProtKB"/>
</dbReference>
<dbReference type="GO" id="GO:0045252">
    <property type="term" value="C:oxoglutarate dehydrogenase complex"/>
    <property type="evidence" value="ECO:0000250"/>
    <property type="project" value="UniProtKB"/>
</dbReference>
<dbReference type="GO" id="GO:0052689">
    <property type="term" value="F:carboxylic ester hydrolase activity"/>
    <property type="evidence" value="ECO:0000318"/>
    <property type="project" value="GO_Central"/>
</dbReference>
<dbReference type="GO" id="GO:0016298">
    <property type="term" value="F:lipase activity"/>
    <property type="evidence" value="ECO:0000250"/>
    <property type="project" value="UniProtKB"/>
</dbReference>
<dbReference type="GO" id="GO:0006629">
    <property type="term" value="P:lipid metabolic process"/>
    <property type="evidence" value="ECO:0000318"/>
    <property type="project" value="GO_Central"/>
</dbReference>
<dbReference type="FunFam" id="3.40.50.1820:FF:000039">
    <property type="entry name" value="Esterase ybfF"/>
    <property type="match status" value="1"/>
</dbReference>
<dbReference type="Gene3D" id="3.40.50.1820">
    <property type="entry name" value="alpha/beta hydrolase"/>
    <property type="match status" value="1"/>
</dbReference>
<dbReference type="InterPro" id="IPR000073">
    <property type="entry name" value="AB_hydrolase_1"/>
</dbReference>
<dbReference type="InterPro" id="IPR029058">
    <property type="entry name" value="AB_hydrolase_fold"/>
</dbReference>
<dbReference type="PANTHER" id="PTHR46118">
    <property type="entry name" value="PROTEIN ABHD11"/>
    <property type="match status" value="1"/>
</dbReference>
<dbReference type="PANTHER" id="PTHR46118:SF4">
    <property type="entry name" value="PROTEIN ABHD11"/>
    <property type="match status" value="1"/>
</dbReference>
<dbReference type="Pfam" id="PF00561">
    <property type="entry name" value="Abhydrolase_1"/>
    <property type="match status" value="1"/>
</dbReference>
<dbReference type="PRINTS" id="PR00111">
    <property type="entry name" value="ABHYDROLASE"/>
</dbReference>
<dbReference type="SUPFAM" id="SSF53474">
    <property type="entry name" value="alpha/beta-Hydrolases"/>
    <property type="match status" value="1"/>
</dbReference>
<feature type="transit peptide" description="Mitochondrion" evidence="4">
    <location>
        <begin position="1"/>
        <end position="14"/>
    </location>
</feature>
<feature type="chain" id="PRO_0000281006" description="sn-1-specific diacylglycerol lipase ABHD11">
    <location>
        <begin position="15"/>
        <end position="312"/>
    </location>
</feature>
<feature type="domain" description="AB hydrolase-1" evidence="4">
    <location>
        <begin position="62"/>
        <end position="297"/>
    </location>
</feature>
<feature type="active site" description="Charge relay system" evidence="1">
    <location>
        <position position="136"/>
    </location>
</feature>
<feature type="active site" description="Charge relay system" evidence="1">
    <location>
        <position position="232"/>
    </location>
</feature>
<feature type="active site" description="Charge relay system" evidence="1">
    <location>
        <position position="291"/>
    </location>
</feature>
<protein>
    <recommendedName>
        <fullName evidence="5">sn-1-specific diacylglycerol lipase ABHD11</fullName>
        <ecNumber evidence="3">3.1.1.116</ecNumber>
    </recommendedName>
    <alternativeName>
        <fullName evidence="5">Alpha/beta hydrolase domain-containing protein 11</fullName>
        <shortName evidence="3">Abhydrolase domain-containing protein 11</shortName>
    </alternativeName>
</protein>
<evidence type="ECO:0000250" key="1"/>
<evidence type="ECO:0000250" key="2">
    <source>
        <dbReference type="UniProtKB" id="Q3SZ73"/>
    </source>
</evidence>
<evidence type="ECO:0000250" key="3">
    <source>
        <dbReference type="UniProtKB" id="Q8NFV4"/>
    </source>
</evidence>
<evidence type="ECO:0000255" key="4"/>
<evidence type="ECO:0000305" key="5"/>